<reference key="1">
    <citation type="submission" date="2008-10" db="EMBL/GenBank/DDBJ databases">
        <title>The complete genome sequence of Helicobacter pylori strain P12.</title>
        <authorList>
            <person name="Fischer W."/>
            <person name="Windhager L."/>
            <person name="Karnholz A."/>
            <person name="Zeiller M."/>
            <person name="Zimmer R."/>
            <person name="Haas R."/>
        </authorList>
    </citation>
    <scope>NUCLEOTIDE SEQUENCE [LARGE SCALE GENOMIC DNA]</scope>
    <source>
        <strain>P12</strain>
    </source>
</reference>
<accession>B6JN65</accession>
<keyword id="KW-0997">Cell inner membrane</keyword>
<keyword id="KW-1003">Cell membrane</keyword>
<keyword id="KW-0407">Ion channel</keyword>
<keyword id="KW-0406">Ion transport</keyword>
<keyword id="KW-0472">Membrane</keyword>
<keyword id="KW-0479">Metal-binding</keyword>
<keyword id="KW-0915">Sodium</keyword>
<keyword id="KW-0812">Transmembrane</keyword>
<keyword id="KW-1133">Transmembrane helix</keyword>
<keyword id="KW-0813">Transport</keyword>
<proteinExistence type="inferred from homology"/>
<comment type="function">
    <text evidence="1">Fluoride-specific ion channel. Important for reducing fluoride concentration in the cell, thus reducing its toxicity.</text>
</comment>
<comment type="catalytic activity">
    <reaction evidence="1">
        <text>fluoride(in) = fluoride(out)</text>
        <dbReference type="Rhea" id="RHEA:76159"/>
        <dbReference type="ChEBI" id="CHEBI:17051"/>
    </reaction>
    <physiologicalReaction direction="left-to-right" evidence="1">
        <dbReference type="Rhea" id="RHEA:76160"/>
    </physiologicalReaction>
</comment>
<comment type="activity regulation">
    <text evidence="1">Na(+) is not transported, but it plays an essential structural role and its presence is essential for fluoride channel function.</text>
</comment>
<comment type="subcellular location">
    <subcellularLocation>
        <location evidence="1">Cell inner membrane</location>
        <topology evidence="1">Multi-pass membrane protein</topology>
    </subcellularLocation>
</comment>
<comment type="similarity">
    <text evidence="1">Belongs to the fluoride channel Fluc/FEX (TC 1.A.43) family.</text>
</comment>
<sequence>MNFVFLWAALGGAIGSSLRYFVGKMMPSKFLMFESFPLGTFSVNIIGCFVIGFMGHLAVKKVFGDDFGIFFITGVLGGFTTFSSYGLDTLKLLQKSQYIEAISYVLGTNILGFIGVAIGWFLAKNFVGVN</sequence>
<dbReference type="EMBL" id="CP001217">
    <property type="protein sequence ID" value="ACJ08343.1"/>
    <property type="molecule type" value="Genomic_DNA"/>
</dbReference>
<dbReference type="SMR" id="B6JN65"/>
<dbReference type="KEGG" id="hpp:HPP12_1191"/>
<dbReference type="HOGENOM" id="CLU_114342_2_3_7"/>
<dbReference type="Proteomes" id="UP000008198">
    <property type="component" value="Chromosome"/>
</dbReference>
<dbReference type="GO" id="GO:0005886">
    <property type="term" value="C:plasma membrane"/>
    <property type="evidence" value="ECO:0007669"/>
    <property type="project" value="UniProtKB-SubCell"/>
</dbReference>
<dbReference type="GO" id="GO:0062054">
    <property type="term" value="F:fluoride channel activity"/>
    <property type="evidence" value="ECO:0007669"/>
    <property type="project" value="UniProtKB-UniRule"/>
</dbReference>
<dbReference type="GO" id="GO:0046872">
    <property type="term" value="F:metal ion binding"/>
    <property type="evidence" value="ECO:0007669"/>
    <property type="project" value="UniProtKB-KW"/>
</dbReference>
<dbReference type="GO" id="GO:0140114">
    <property type="term" value="P:cellular detoxification of fluoride"/>
    <property type="evidence" value="ECO:0007669"/>
    <property type="project" value="UniProtKB-UniRule"/>
</dbReference>
<dbReference type="HAMAP" id="MF_00454">
    <property type="entry name" value="FluC"/>
    <property type="match status" value="1"/>
</dbReference>
<dbReference type="InterPro" id="IPR003691">
    <property type="entry name" value="FluC"/>
</dbReference>
<dbReference type="NCBIfam" id="TIGR00494">
    <property type="entry name" value="crcB"/>
    <property type="match status" value="1"/>
</dbReference>
<dbReference type="PANTHER" id="PTHR28259">
    <property type="entry name" value="FLUORIDE EXPORT PROTEIN 1-RELATED"/>
    <property type="match status" value="1"/>
</dbReference>
<dbReference type="PANTHER" id="PTHR28259:SF18">
    <property type="entry name" value="FLUORIDE-SPECIFIC ION CHANNEL FLUC"/>
    <property type="match status" value="1"/>
</dbReference>
<dbReference type="Pfam" id="PF02537">
    <property type="entry name" value="CRCB"/>
    <property type="match status" value="1"/>
</dbReference>
<evidence type="ECO:0000255" key="1">
    <source>
        <dbReference type="HAMAP-Rule" id="MF_00454"/>
    </source>
</evidence>
<protein>
    <recommendedName>
        <fullName evidence="1">Fluoride-specific ion channel FluC</fullName>
    </recommendedName>
</protein>
<organism>
    <name type="scientific">Helicobacter pylori (strain P12)</name>
    <dbReference type="NCBI Taxonomy" id="570508"/>
    <lineage>
        <taxon>Bacteria</taxon>
        <taxon>Pseudomonadati</taxon>
        <taxon>Campylobacterota</taxon>
        <taxon>Epsilonproteobacteria</taxon>
        <taxon>Campylobacterales</taxon>
        <taxon>Helicobacteraceae</taxon>
        <taxon>Helicobacter</taxon>
    </lineage>
</organism>
<feature type="chain" id="PRO_1000125134" description="Fluoride-specific ion channel FluC">
    <location>
        <begin position="1"/>
        <end position="130"/>
    </location>
</feature>
<feature type="transmembrane region" description="Helical" evidence="1">
    <location>
        <begin position="3"/>
        <end position="23"/>
    </location>
</feature>
<feature type="transmembrane region" description="Helical" evidence="1">
    <location>
        <begin position="39"/>
        <end position="59"/>
    </location>
</feature>
<feature type="transmembrane region" description="Helical" evidence="1">
    <location>
        <begin position="67"/>
        <end position="87"/>
    </location>
</feature>
<feature type="transmembrane region" description="Helical" evidence="1">
    <location>
        <begin position="102"/>
        <end position="122"/>
    </location>
</feature>
<feature type="binding site" evidence="1">
    <location>
        <position position="77"/>
    </location>
    <ligand>
        <name>Na(+)</name>
        <dbReference type="ChEBI" id="CHEBI:29101"/>
        <note>structural</note>
    </ligand>
</feature>
<feature type="binding site" evidence="1">
    <location>
        <position position="80"/>
    </location>
    <ligand>
        <name>Na(+)</name>
        <dbReference type="ChEBI" id="CHEBI:29101"/>
        <note>structural</note>
    </ligand>
</feature>
<gene>
    <name evidence="1" type="primary">fluC</name>
    <name evidence="1" type="synonym">crcB</name>
    <name type="ordered locus">HPP12_1191</name>
</gene>
<name>FLUC_HELP2</name>